<gene>
    <name evidence="1" type="primary">rpoZ</name>
    <name type="ordered locus">Ppro_2400</name>
</gene>
<keyword id="KW-0240">DNA-directed RNA polymerase</keyword>
<keyword id="KW-0548">Nucleotidyltransferase</keyword>
<keyword id="KW-1185">Reference proteome</keyword>
<keyword id="KW-0804">Transcription</keyword>
<keyword id="KW-0808">Transferase</keyword>
<proteinExistence type="inferred from homology"/>
<name>RPOZ_PELPD</name>
<organism>
    <name type="scientific">Pelobacter propionicus (strain DSM 2379 / NBRC 103807 / OttBd1)</name>
    <dbReference type="NCBI Taxonomy" id="338966"/>
    <lineage>
        <taxon>Bacteria</taxon>
        <taxon>Pseudomonadati</taxon>
        <taxon>Thermodesulfobacteriota</taxon>
        <taxon>Desulfuromonadia</taxon>
        <taxon>Desulfuromonadales</taxon>
        <taxon>Desulfuromonadaceae</taxon>
        <taxon>Pelobacter</taxon>
    </lineage>
</organism>
<evidence type="ECO:0000255" key="1">
    <source>
        <dbReference type="HAMAP-Rule" id="MF_00366"/>
    </source>
</evidence>
<sequence>MARVTVEDCLDKVENRFLLVMLASKRVKQLYKGARPLVDPKNNRLVVTSLREIAAGKVGYEMIKRQRTQQ</sequence>
<accession>A1ARN6</accession>
<feature type="chain" id="PRO_1000005971" description="DNA-directed RNA polymerase subunit omega">
    <location>
        <begin position="1"/>
        <end position="70"/>
    </location>
</feature>
<dbReference type="EC" id="2.7.7.6" evidence="1"/>
<dbReference type="EMBL" id="CP000482">
    <property type="protein sequence ID" value="ABL00007.1"/>
    <property type="molecule type" value="Genomic_DNA"/>
</dbReference>
<dbReference type="RefSeq" id="WP_011736262.1">
    <property type="nucleotide sequence ID" value="NC_008609.1"/>
</dbReference>
<dbReference type="SMR" id="A1ARN6"/>
<dbReference type="STRING" id="338966.Ppro_2400"/>
<dbReference type="KEGG" id="ppd:Ppro_2400"/>
<dbReference type="eggNOG" id="COG1758">
    <property type="taxonomic scope" value="Bacteria"/>
</dbReference>
<dbReference type="HOGENOM" id="CLU_125406_5_1_7"/>
<dbReference type="OrthoDB" id="9796300at2"/>
<dbReference type="Proteomes" id="UP000006732">
    <property type="component" value="Chromosome"/>
</dbReference>
<dbReference type="GO" id="GO:0000428">
    <property type="term" value="C:DNA-directed RNA polymerase complex"/>
    <property type="evidence" value="ECO:0007669"/>
    <property type="project" value="UniProtKB-KW"/>
</dbReference>
<dbReference type="GO" id="GO:0003677">
    <property type="term" value="F:DNA binding"/>
    <property type="evidence" value="ECO:0007669"/>
    <property type="project" value="UniProtKB-UniRule"/>
</dbReference>
<dbReference type="GO" id="GO:0003899">
    <property type="term" value="F:DNA-directed RNA polymerase activity"/>
    <property type="evidence" value="ECO:0007669"/>
    <property type="project" value="UniProtKB-UniRule"/>
</dbReference>
<dbReference type="GO" id="GO:0006351">
    <property type="term" value="P:DNA-templated transcription"/>
    <property type="evidence" value="ECO:0007669"/>
    <property type="project" value="UniProtKB-UniRule"/>
</dbReference>
<dbReference type="Gene3D" id="3.90.940.10">
    <property type="match status" value="1"/>
</dbReference>
<dbReference type="HAMAP" id="MF_00366">
    <property type="entry name" value="RNApol_bact_RpoZ"/>
    <property type="match status" value="1"/>
</dbReference>
<dbReference type="InterPro" id="IPR003716">
    <property type="entry name" value="DNA-dir_RNA_pol_omega"/>
</dbReference>
<dbReference type="InterPro" id="IPR006110">
    <property type="entry name" value="Pol_omega/Rpo6/RPB6"/>
</dbReference>
<dbReference type="InterPro" id="IPR036161">
    <property type="entry name" value="RPB6/omega-like_sf"/>
</dbReference>
<dbReference type="NCBIfam" id="TIGR00690">
    <property type="entry name" value="rpoZ"/>
    <property type="match status" value="1"/>
</dbReference>
<dbReference type="PANTHER" id="PTHR34476">
    <property type="entry name" value="DNA-DIRECTED RNA POLYMERASE SUBUNIT OMEGA"/>
    <property type="match status" value="1"/>
</dbReference>
<dbReference type="PANTHER" id="PTHR34476:SF1">
    <property type="entry name" value="DNA-DIRECTED RNA POLYMERASE SUBUNIT OMEGA"/>
    <property type="match status" value="1"/>
</dbReference>
<dbReference type="Pfam" id="PF01192">
    <property type="entry name" value="RNA_pol_Rpb6"/>
    <property type="match status" value="1"/>
</dbReference>
<dbReference type="SMART" id="SM01409">
    <property type="entry name" value="RNA_pol_Rpb6"/>
    <property type="match status" value="1"/>
</dbReference>
<dbReference type="SUPFAM" id="SSF63562">
    <property type="entry name" value="RPB6/omega subunit-like"/>
    <property type="match status" value="1"/>
</dbReference>
<comment type="function">
    <text evidence="1">Promotes RNA polymerase assembly. Latches the N- and C-terminal regions of the beta' subunit thereby facilitating its interaction with the beta and alpha subunits.</text>
</comment>
<comment type="catalytic activity">
    <reaction evidence="1">
        <text>RNA(n) + a ribonucleoside 5'-triphosphate = RNA(n+1) + diphosphate</text>
        <dbReference type="Rhea" id="RHEA:21248"/>
        <dbReference type="Rhea" id="RHEA-COMP:14527"/>
        <dbReference type="Rhea" id="RHEA-COMP:17342"/>
        <dbReference type="ChEBI" id="CHEBI:33019"/>
        <dbReference type="ChEBI" id="CHEBI:61557"/>
        <dbReference type="ChEBI" id="CHEBI:140395"/>
        <dbReference type="EC" id="2.7.7.6"/>
    </reaction>
</comment>
<comment type="subunit">
    <text evidence="1">The RNAP catalytic core consists of 2 alpha, 1 beta, 1 beta' and 1 omega subunit. When a sigma factor is associated with the core the holoenzyme is formed, which can initiate transcription.</text>
</comment>
<comment type="similarity">
    <text evidence="1">Belongs to the RNA polymerase subunit omega family.</text>
</comment>
<reference key="1">
    <citation type="submission" date="2006-10" db="EMBL/GenBank/DDBJ databases">
        <title>Complete sequence of chromosome of Pelobacter propionicus DSM 2379.</title>
        <authorList>
            <consortium name="US DOE Joint Genome Institute"/>
            <person name="Copeland A."/>
            <person name="Lucas S."/>
            <person name="Lapidus A."/>
            <person name="Barry K."/>
            <person name="Detter J.C."/>
            <person name="Glavina del Rio T."/>
            <person name="Hammon N."/>
            <person name="Israni S."/>
            <person name="Dalin E."/>
            <person name="Tice H."/>
            <person name="Pitluck S."/>
            <person name="Saunders E."/>
            <person name="Brettin T."/>
            <person name="Bruce D."/>
            <person name="Han C."/>
            <person name="Tapia R."/>
            <person name="Schmutz J."/>
            <person name="Larimer F."/>
            <person name="Land M."/>
            <person name="Hauser L."/>
            <person name="Kyrpides N."/>
            <person name="Kim E."/>
            <person name="Lovley D."/>
            <person name="Richardson P."/>
        </authorList>
    </citation>
    <scope>NUCLEOTIDE SEQUENCE [LARGE SCALE GENOMIC DNA]</scope>
    <source>
        <strain>DSM 2379 / NBRC 103807 / OttBd1</strain>
    </source>
</reference>
<protein>
    <recommendedName>
        <fullName evidence="1">DNA-directed RNA polymerase subunit omega</fullName>
        <shortName evidence="1">RNAP omega subunit</shortName>
        <ecNumber evidence="1">2.7.7.6</ecNumber>
    </recommendedName>
    <alternativeName>
        <fullName evidence="1">RNA polymerase omega subunit</fullName>
    </alternativeName>
    <alternativeName>
        <fullName evidence="1">Transcriptase subunit omega</fullName>
    </alternativeName>
</protein>